<feature type="chain" id="PRO_0000133724" description="Large ribosomal subunit protein uL13">
    <location>
        <begin position="1"/>
        <end position="144"/>
    </location>
</feature>
<feature type="region of interest" description="Disordered" evidence="2">
    <location>
        <begin position="125"/>
        <end position="144"/>
    </location>
</feature>
<dbReference type="EMBL" id="AE000657">
    <property type="protein sequence ID" value="AAC07691.1"/>
    <property type="molecule type" value="Genomic_DNA"/>
</dbReference>
<dbReference type="PIR" id="H70461">
    <property type="entry name" value="H70461"/>
</dbReference>
<dbReference type="RefSeq" id="NP_214290.1">
    <property type="nucleotide sequence ID" value="NC_000918.1"/>
</dbReference>
<dbReference type="RefSeq" id="WP_010881226.1">
    <property type="nucleotide sequence ID" value="NC_000918.1"/>
</dbReference>
<dbReference type="SMR" id="O67722"/>
<dbReference type="FunCoup" id="O67722">
    <property type="interactions" value="522"/>
</dbReference>
<dbReference type="STRING" id="224324.aq_1877"/>
<dbReference type="EnsemblBacteria" id="AAC07691">
    <property type="protein sequence ID" value="AAC07691"/>
    <property type="gene ID" value="aq_1877"/>
</dbReference>
<dbReference type="KEGG" id="aae:aq_1877"/>
<dbReference type="PATRIC" id="fig|224324.8.peg.1455"/>
<dbReference type="eggNOG" id="COG0102">
    <property type="taxonomic scope" value="Bacteria"/>
</dbReference>
<dbReference type="HOGENOM" id="CLU_082184_2_2_0"/>
<dbReference type="InParanoid" id="O67722"/>
<dbReference type="OrthoDB" id="9801330at2"/>
<dbReference type="Proteomes" id="UP000000798">
    <property type="component" value="Chromosome"/>
</dbReference>
<dbReference type="GO" id="GO:0022625">
    <property type="term" value="C:cytosolic large ribosomal subunit"/>
    <property type="evidence" value="ECO:0000318"/>
    <property type="project" value="GO_Central"/>
</dbReference>
<dbReference type="GO" id="GO:0005840">
    <property type="term" value="C:ribosome"/>
    <property type="evidence" value="ECO:0000318"/>
    <property type="project" value="GO_Central"/>
</dbReference>
<dbReference type="GO" id="GO:0003729">
    <property type="term" value="F:mRNA binding"/>
    <property type="evidence" value="ECO:0000318"/>
    <property type="project" value="GO_Central"/>
</dbReference>
<dbReference type="GO" id="GO:0003735">
    <property type="term" value="F:structural constituent of ribosome"/>
    <property type="evidence" value="ECO:0000318"/>
    <property type="project" value="GO_Central"/>
</dbReference>
<dbReference type="GO" id="GO:0017148">
    <property type="term" value="P:negative regulation of translation"/>
    <property type="evidence" value="ECO:0000318"/>
    <property type="project" value="GO_Central"/>
</dbReference>
<dbReference type="GO" id="GO:0006412">
    <property type="term" value="P:translation"/>
    <property type="evidence" value="ECO:0007669"/>
    <property type="project" value="UniProtKB-UniRule"/>
</dbReference>
<dbReference type="CDD" id="cd00392">
    <property type="entry name" value="Ribosomal_L13"/>
    <property type="match status" value="1"/>
</dbReference>
<dbReference type="FunFam" id="3.90.1180.10:FF:000001">
    <property type="entry name" value="50S ribosomal protein L13"/>
    <property type="match status" value="1"/>
</dbReference>
<dbReference type="Gene3D" id="3.90.1180.10">
    <property type="entry name" value="Ribosomal protein L13"/>
    <property type="match status" value="1"/>
</dbReference>
<dbReference type="HAMAP" id="MF_01366">
    <property type="entry name" value="Ribosomal_uL13"/>
    <property type="match status" value="1"/>
</dbReference>
<dbReference type="InterPro" id="IPR005822">
    <property type="entry name" value="Ribosomal_uL13"/>
</dbReference>
<dbReference type="InterPro" id="IPR005823">
    <property type="entry name" value="Ribosomal_uL13_bac-type"/>
</dbReference>
<dbReference type="InterPro" id="IPR023563">
    <property type="entry name" value="Ribosomal_uL13_CS"/>
</dbReference>
<dbReference type="InterPro" id="IPR036899">
    <property type="entry name" value="Ribosomal_uL13_sf"/>
</dbReference>
<dbReference type="NCBIfam" id="TIGR01066">
    <property type="entry name" value="rplM_bact"/>
    <property type="match status" value="1"/>
</dbReference>
<dbReference type="PANTHER" id="PTHR11545:SF2">
    <property type="entry name" value="LARGE RIBOSOMAL SUBUNIT PROTEIN UL13M"/>
    <property type="match status" value="1"/>
</dbReference>
<dbReference type="PANTHER" id="PTHR11545">
    <property type="entry name" value="RIBOSOMAL PROTEIN L13"/>
    <property type="match status" value="1"/>
</dbReference>
<dbReference type="Pfam" id="PF00572">
    <property type="entry name" value="Ribosomal_L13"/>
    <property type="match status" value="1"/>
</dbReference>
<dbReference type="PIRSF" id="PIRSF002181">
    <property type="entry name" value="Ribosomal_L13"/>
    <property type="match status" value="1"/>
</dbReference>
<dbReference type="SUPFAM" id="SSF52161">
    <property type="entry name" value="Ribosomal protein L13"/>
    <property type="match status" value="1"/>
</dbReference>
<dbReference type="PROSITE" id="PS00783">
    <property type="entry name" value="RIBOSOMAL_L13"/>
    <property type="match status" value="1"/>
</dbReference>
<proteinExistence type="inferred from homology"/>
<sequence length="144" mass="17068">MKTYRIKPEEVERKWWVVDATGKTLGRLASEIAKILRGKHKPYYQPDVDCGDFVIVINAEKIRVTGKKLEQKKYYWHSRYPGGLKERTLKWMLENKPEEVIRLAVKRMLPKNRLGHRMLKKLKVYRGPEHPHQAQKPQPLEVKA</sequence>
<name>RL13_AQUAE</name>
<gene>
    <name evidence="1" type="primary">rplM</name>
    <name type="ordered locus">aq_1877</name>
</gene>
<comment type="function">
    <text evidence="1">This protein is one of the early assembly proteins of the 50S ribosomal subunit, although it is not seen to bind rRNA by itself. It is important during the early stages of 50S assembly.</text>
</comment>
<comment type="subunit">
    <text evidence="1">Part of the 50S ribosomal subunit.</text>
</comment>
<comment type="similarity">
    <text evidence="1">Belongs to the universal ribosomal protein uL13 family.</text>
</comment>
<reference key="1">
    <citation type="journal article" date="1998" name="Nature">
        <title>The complete genome of the hyperthermophilic bacterium Aquifex aeolicus.</title>
        <authorList>
            <person name="Deckert G."/>
            <person name="Warren P.V."/>
            <person name="Gaasterland T."/>
            <person name="Young W.G."/>
            <person name="Lenox A.L."/>
            <person name="Graham D.E."/>
            <person name="Overbeek R."/>
            <person name="Snead M.A."/>
            <person name="Keller M."/>
            <person name="Aujay M."/>
            <person name="Huber R."/>
            <person name="Feldman R.A."/>
            <person name="Short J.M."/>
            <person name="Olsen G.J."/>
            <person name="Swanson R.V."/>
        </authorList>
    </citation>
    <scope>NUCLEOTIDE SEQUENCE [LARGE SCALE GENOMIC DNA]</scope>
    <source>
        <strain>VF5</strain>
    </source>
</reference>
<keyword id="KW-1185">Reference proteome</keyword>
<keyword id="KW-0687">Ribonucleoprotein</keyword>
<keyword id="KW-0689">Ribosomal protein</keyword>
<accession>O67722</accession>
<organism>
    <name type="scientific">Aquifex aeolicus (strain VF5)</name>
    <dbReference type="NCBI Taxonomy" id="224324"/>
    <lineage>
        <taxon>Bacteria</taxon>
        <taxon>Pseudomonadati</taxon>
        <taxon>Aquificota</taxon>
        <taxon>Aquificia</taxon>
        <taxon>Aquificales</taxon>
        <taxon>Aquificaceae</taxon>
        <taxon>Aquifex</taxon>
    </lineage>
</organism>
<protein>
    <recommendedName>
        <fullName evidence="1">Large ribosomal subunit protein uL13</fullName>
    </recommendedName>
    <alternativeName>
        <fullName evidence="3">50S ribosomal protein L13</fullName>
    </alternativeName>
</protein>
<evidence type="ECO:0000255" key="1">
    <source>
        <dbReference type="HAMAP-Rule" id="MF_01366"/>
    </source>
</evidence>
<evidence type="ECO:0000256" key="2">
    <source>
        <dbReference type="SAM" id="MobiDB-lite"/>
    </source>
</evidence>
<evidence type="ECO:0000305" key="3"/>